<dbReference type="EMBL" id="CP000255">
    <property type="protein sequence ID" value="ABD22296.1"/>
    <property type="molecule type" value="Genomic_DNA"/>
</dbReference>
<dbReference type="RefSeq" id="WP_001242102.1">
    <property type="nucleotide sequence ID" value="NZ_CP027476.1"/>
</dbReference>
<dbReference type="KEGG" id="saa:SAUSA300_0906"/>
<dbReference type="HOGENOM" id="CLU_142282_0_0_9"/>
<dbReference type="OMA" id="DSDHFAF"/>
<dbReference type="Proteomes" id="UP000001939">
    <property type="component" value="Chromosome"/>
</dbReference>
<dbReference type="HAMAP" id="MF_01861">
    <property type="entry name" value="UPF0738"/>
    <property type="match status" value="1"/>
</dbReference>
<dbReference type="InterPro" id="IPR020908">
    <property type="entry name" value="UPF0738"/>
</dbReference>
<dbReference type="Pfam" id="PF19785">
    <property type="entry name" value="UPF0738"/>
    <property type="match status" value="1"/>
</dbReference>
<feature type="chain" id="PRO_0000369670" description="UPF0738 protein SAUSA300_0906">
    <location>
        <begin position="1"/>
        <end position="115"/>
    </location>
</feature>
<sequence>MRLYINEIKIKDDILYCYTEDSIKGLSEVGQMLVDSDNYAFAYTLDDGKAYAYLIFVQETWTMLHENMTKKIIINDELELTEFHQELTYILDNIKGNNNYGKEFVATVEETFDIE</sequence>
<proteinExistence type="inferred from homology"/>
<comment type="similarity">
    <text evidence="1">Belongs to the UPF0738 family.</text>
</comment>
<protein>
    <recommendedName>
        <fullName evidence="1">UPF0738 protein SAUSA300_0906</fullName>
    </recommendedName>
</protein>
<name>Y906_STAA3</name>
<accession>Q2FI72</accession>
<evidence type="ECO:0000255" key="1">
    <source>
        <dbReference type="HAMAP-Rule" id="MF_01861"/>
    </source>
</evidence>
<organism>
    <name type="scientific">Staphylococcus aureus (strain USA300)</name>
    <dbReference type="NCBI Taxonomy" id="367830"/>
    <lineage>
        <taxon>Bacteria</taxon>
        <taxon>Bacillati</taxon>
        <taxon>Bacillota</taxon>
        <taxon>Bacilli</taxon>
        <taxon>Bacillales</taxon>
        <taxon>Staphylococcaceae</taxon>
        <taxon>Staphylococcus</taxon>
    </lineage>
</organism>
<reference key="1">
    <citation type="journal article" date="2006" name="Lancet">
        <title>Complete genome sequence of USA300, an epidemic clone of community-acquired meticillin-resistant Staphylococcus aureus.</title>
        <authorList>
            <person name="Diep B.A."/>
            <person name="Gill S.R."/>
            <person name="Chang R.F."/>
            <person name="Phan T.H."/>
            <person name="Chen J.H."/>
            <person name="Davidson M.G."/>
            <person name="Lin F."/>
            <person name="Lin J."/>
            <person name="Carleton H.A."/>
            <person name="Mongodin E.F."/>
            <person name="Sensabaugh G.F."/>
            <person name="Perdreau-Remington F."/>
        </authorList>
    </citation>
    <scope>NUCLEOTIDE SEQUENCE [LARGE SCALE GENOMIC DNA]</scope>
    <source>
        <strain>USA300</strain>
    </source>
</reference>
<gene>
    <name type="ordered locus">SAUSA300_0906</name>
</gene>